<name>PROFE_OLEEU</name>
<sequence length="134" mass="14453">MLWQAYVDDHLMCDIEGHEGHRLTAAAIVGHDGSVWAQSATFPQFKPEEMNGIMTDFNEPGHLAPTGLHLGGTKYMVIQGEAGAVIRGKKGSGGITIKKTGQALVFGIYEEPVTPGQCNMVVERLGDYLLEQGL</sequence>
<keyword id="KW-0009">Actin-binding</keyword>
<keyword id="KW-0020">Allergen</keyword>
<keyword id="KW-0963">Cytoplasm</keyword>
<keyword id="KW-0206">Cytoskeleton</keyword>
<keyword id="KW-1015">Disulfide bond</keyword>
<keyword id="KW-0597">Phosphoprotein</keyword>
<organism>
    <name type="scientific">Olea europaea</name>
    <name type="common">Common olive</name>
    <dbReference type="NCBI Taxonomy" id="4146"/>
    <lineage>
        <taxon>Eukaryota</taxon>
        <taxon>Viridiplantae</taxon>
        <taxon>Streptophyta</taxon>
        <taxon>Embryophyta</taxon>
        <taxon>Tracheophyta</taxon>
        <taxon>Spermatophyta</taxon>
        <taxon>Magnoliopsida</taxon>
        <taxon>eudicotyledons</taxon>
        <taxon>Gunneridae</taxon>
        <taxon>Pentapetalae</taxon>
        <taxon>asterids</taxon>
        <taxon>lamiids</taxon>
        <taxon>Lamiales</taxon>
        <taxon>Oleaceae</taxon>
        <taxon>Oleeae</taxon>
        <taxon>Olea</taxon>
    </lineage>
</organism>
<protein>
    <recommendedName>
        <fullName>Profilin-2</fullName>
    </recommendedName>
    <alternativeName>
        <fullName>Pollen allergen Ole e 2</fullName>
    </alternativeName>
    <allergenName>Ole e 2</allergenName>
</protein>
<reference key="1">
    <citation type="journal article" date="2012" name="PLoS ONE">
        <title>Characterization of profilin polymorphism in pollen with a focus on multifunctionality.</title>
        <authorList>
            <person name="Jimenez-Lopez J.C."/>
            <person name="Morales S."/>
            <person name="Castro A.J."/>
            <person name="Volkmann D."/>
            <person name="Rodriguez-Garcia M.I."/>
            <person name="Alche Jde D."/>
        </authorList>
    </citation>
    <scope>NUCLEOTIDE SEQUENCE [MRNA]</scope>
    <scope>POLYMORPHISM</scope>
    <source>
        <strain>cv. Lechin de Sevilla</strain>
        <tissue>Pollen</tissue>
    </source>
</reference>
<reference key="2">
    <citation type="journal article" date="2013" name="PLoS ONE">
        <title>Analysis of the effects of polymorphism on pollen profilin structural functionality and the generation of conformational, T- and B-cell epitopes.</title>
        <authorList>
            <person name="Jimenez-Lopez J.C."/>
            <person name="Rodriguez-Garcia M.I."/>
            <person name="Alche J.D."/>
        </authorList>
    </citation>
    <scope>3D-STRUCTURE MODELING</scope>
    <scope>DISULFIDE BOND</scope>
</reference>
<feature type="initiator methionine" description="Removed" evidence="1">
    <location>
        <position position="1"/>
    </location>
</feature>
<feature type="chain" id="PRO_0000424970" description="Profilin-2">
    <location>
        <begin position="2"/>
        <end position="134"/>
    </location>
</feature>
<feature type="short sequence motif" description="Involved in PIP2 interaction">
    <location>
        <begin position="84"/>
        <end position="100"/>
    </location>
</feature>
<feature type="modified residue" description="Phosphothreonine" evidence="1">
    <location>
        <position position="114"/>
    </location>
</feature>
<feature type="disulfide bond" evidence="3">
    <location>
        <begin position="13"/>
        <end position="118"/>
    </location>
</feature>
<proteinExistence type="evidence at protein level"/>
<comment type="subcellular location">
    <subcellularLocation>
        <location evidence="1">Cytoplasm</location>
        <location evidence="1">Cytoskeleton</location>
    </subcellularLocation>
</comment>
<comment type="PTM">
    <text evidence="1">Phosphorylated by MAP kinases.</text>
</comment>
<comment type="polymorphism">
    <text>Several isoforms of the allergen exist due to polymorphism.</text>
</comment>
<comment type="allergen">
    <text>Causes an allergic reaction in human.</text>
</comment>
<comment type="miscellaneous">
    <text evidence="3">The variability of the residues taking part of IgE-binding epitopes might be responsible of the difference in cross-reactivity among olive pollen cultivars, and between distantly related pollen species, leading to a variable range of allergy reactions among atopic patients.</text>
</comment>
<comment type="similarity">
    <text evidence="2">Belongs to the profilin family.</text>
</comment>
<evidence type="ECO:0000250" key="1"/>
<evidence type="ECO:0000305" key="2"/>
<evidence type="ECO:0000305" key="3">
    <source>
    </source>
</evidence>
<accession>A4GCR5</accession>
<dbReference type="EMBL" id="DQ061976">
    <property type="protein sequence ID" value="AAZ08564.1"/>
    <property type="molecule type" value="mRNA"/>
</dbReference>
<dbReference type="SMR" id="A4GCR5"/>
<dbReference type="Allergome" id="490">
    <property type="allergen name" value="Ole e 2"/>
</dbReference>
<dbReference type="GO" id="GO:0005938">
    <property type="term" value="C:cell cortex"/>
    <property type="evidence" value="ECO:0007669"/>
    <property type="project" value="TreeGrafter"/>
</dbReference>
<dbReference type="GO" id="GO:0005856">
    <property type="term" value="C:cytoskeleton"/>
    <property type="evidence" value="ECO:0007669"/>
    <property type="project" value="UniProtKB-SubCell"/>
</dbReference>
<dbReference type="GO" id="GO:0003785">
    <property type="term" value="F:actin monomer binding"/>
    <property type="evidence" value="ECO:0007669"/>
    <property type="project" value="TreeGrafter"/>
</dbReference>
<dbReference type="CDD" id="cd00148">
    <property type="entry name" value="PROF"/>
    <property type="match status" value="1"/>
</dbReference>
<dbReference type="FunFam" id="3.30.450.30:FF:000001">
    <property type="entry name" value="Profilin"/>
    <property type="match status" value="1"/>
</dbReference>
<dbReference type="Gene3D" id="3.30.450.30">
    <property type="entry name" value="Dynein light chain 2a, cytoplasmic"/>
    <property type="match status" value="1"/>
</dbReference>
<dbReference type="InterPro" id="IPR048278">
    <property type="entry name" value="PFN"/>
</dbReference>
<dbReference type="InterPro" id="IPR005455">
    <property type="entry name" value="PFN_euk"/>
</dbReference>
<dbReference type="InterPro" id="IPR036140">
    <property type="entry name" value="PFN_sf"/>
</dbReference>
<dbReference type="PANTHER" id="PTHR11604">
    <property type="entry name" value="PROFILIN"/>
    <property type="match status" value="1"/>
</dbReference>
<dbReference type="PANTHER" id="PTHR11604:SF25">
    <property type="entry name" value="PROFILIN-5"/>
    <property type="match status" value="1"/>
</dbReference>
<dbReference type="Pfam" id="PF00235">
    <property type="entry name" value="Profilin"/>
    <property type="match status" value="1"/>
</dbReference>
<dbReference type="PRINTS" id="PR00392">
    <property type="entry name" value="PROFILIN"/>
</dbReference>
<dbReference type="PRINTS" id="PR01640">
    <property type="entry name" value="PROFILINPLNT"/>
</dbReference>
<dbReference type="SMART" id="SM00392">
    <property type="entry name" value="PROF"/>
    <property type="match status" value="1"/>
</dbReference>
<dbReference type="SUPFAM" id="SSF55770">
    <property type="entry name" value="Profilin (actin-binding protein)"/>
    <property type="match status" value="1"/>
</dbReference>